<sequence>MPPPDSNPGSFRDHLKHDNKNNNSSTTSKGKQRYTPLHDSIPEEIASPRSASASSSFDLDPDLENQSRNDYKLRPLARSSSTNGGHNYSTAYIPVIRDEGDDVETYLDSITEAEQELLSLSKQYDFADDSDDFDSDDDAALRRKVQKQEQRRRRERLKAKVWTPVKYARIWRRTLVVVIVALALLVWGFLRFTAAQRQGPKVWPMLPSDSWFPSPKGGTLKHWEESYRKAQSLVRNMTLIEKVNITTGTGWQMGMCVGNTGPAELVKFPSLCLQDGPQGLRYADHVTAFPAGITTGSTWNRTLMRERGIAMGREARLKGVNVLLGPSIGPIGMMPAGGRNWEGFGSDPVLQGVAAAETIRGIQSNGVMATAKHFLMNEQEHFRQPFEWGISTALSSNVGDRALHEVFAWPFAESIRADVASVMCSYQMVNNSHACENSKLLNGILKDELGFQGFVQSDWLAQRSGINSALGGLDMSMPGDGLHWTDGKSLWGRELTRAVLNTSIPMERLNDMVTRIVAAWYQFEQDEWERPPPEGNGGPNFSSWTGGDVGWLHAGSNDGLYAVVNQYIDAQGTGPEAHSIIARKVAAEGTVLLKNVDHTLPLSRNASGPSGVMRVGIYGDDAGPAQGPNACPDRGCNQGTLATGWGSGTVDFPYLVSPLEALETAWKTEVEMTAFLRNAVMPADVADKDLCLVFANADSGEGFISAGGIHGDRNDLFLQKGGDTLIRTVASHCGEGQGKTVVVIHAVGPVVMESWIDLPGVHAVLLANLPGQESGNALMDVLFGDVDASGRLPYTIGKSLEEYGTEAQVLYEPNAPVPQVDLLDALFIDYRHFDQYNITPRFEFGFGLSYTTFKLKDLHVRSLQSKSRSPAARPAAAVSPPEYNTTLPDPALALFPPGFQPVYKYIYPYLPSLDGTAPANYSYYPKDYNQTQGPSPAGGGAGGNPALFQEMASVSVQVQNTGDRKGQEVVQVYVSFPSDEKVKIDFPERVLRNFTKVELEPGERREVQMTLSRKDLSYWSVREQNWVMPDGDFQIWVGRSSRDLPLQAKY</sequence>
<dbReference type="EC" id="3.2.1.21"/>
<dbReference type="EMBL" id="DS027058">
    <property type="protein sequence ID" value="EAW08763.1"/>
    <property type="molecule type" value="Genomic_DNA"/>
</dbReference>
<dbReference type="RefSeq" id="XP_001270189.1">
    <property type="nucleotide sequence ID" value="XM_001270188.1"/>
</dbReference>
<dbReference type="SMR" id="A1CMH6"/>
<dbReference type="STRING" id="344612.A1CMH6"/>
<dbReference type="GlyCosmos" id="A1CMH6">
    <property type="glycosylation" value="11 sites, No reported glycans"/>
</dbReference>
<dbReference type="EnsemblFungi" id="EAW08763">
    <property type="protein sequence ID" value="EAW08763"/>
    <property type="gene ID" value="ACLA_096980"/>
</dbReference>
<dbReference type="GeneID" id="4702262"/>
<dbReference type="KEGG" id="act:ACLA_096980"/>
<dbReference type="VEuPathDB" id="FungiDB:ACLA_096980"/>
<dbReference type="eggNOG" id="ENOG502QR4D">
    <property type="taxonomic scope" value="Eukaryota"/>
</dbReference>
<dbReference type="HOGENOM" id="CLU_004542_2_0_1"/>
<dbReference type="OMA" id="VVMESWI"/>
<dbReference type="OrthoDB" id="416222at2759"/>
<dbReference type="UniPathway" id="UPA00696"/>
<dbReference type="Proteomes" id="UP000006701">
    <property type="component" value="Unassembled WGS sequence"/>
</dbReference>
<dbReference type="GO" id="GO:0005886">
    <property type="term" value="C:plasma membrane"/>
    <property type="evidence" value="ECO:0007669"/>
    <property type="project" value="UniProtKB-SubCell"/>
</dbReference>
<dbReference type="GO" id="GO:0008422">
    <property type="term" value="F:beta-glucosidase activity"/>
    <property type="evidence" value="ECO:0007669"/>
    <property type="project" value="UniProtKB-EC"/>
</dbReference>
<dbReference type="GO" id="GO:0030245">
    <property type="term" value="P:cellulose catabolic process"/>
    <property type="evidence" value="ECO:0007669"/>
    <property type="project" value="UniProtKB-UniPathway"/>
</dbReference>
<dbReference type="FunFam" id="2.60.40.10:FF:000495">
    <property type="entry name" value="Periplasmic beta-glucosidase"/>
    <property type="match status" value="1"/>
</dbReference>
<dbReference type="FunFam" id="3.20.20.300:FF:000002">
    <property type="entry name" value="Probable beta-glucosidase"/>
    <property type="match status" value="1"/>
</dbReference>
<dbReference type="FunFam" id="3.40.50.1700:FF:000003">
    <property type="entry name" value="Probable beta-glucosidase"/>
    <property type="match status" value="1"/>
</dbReference>
<dbReference type="Gene3D" id="3.40.50.1700">
    <property type="entry name" value="Glycoside hydrolase family 3 C-terminal domain"/>
    <property type="match status" value="1"/>
</dbReference>
<dbReference type="Gene3D" id="3.20.20.300">
    <property type="entry name" value="Glycoside hydrolase, family 3, N-terminal domain"/>
    <property type="match status" value="1"/>
</dbReference>
<dbReference type="Gene3D" id="2.60.40.10">
    <property type="entry name" value="Immunoglobulins"/>
    <property type="match status" value="1"/>
</dbReference>
<dbReference type="InterPro" id="IPR050288">
    <property type="entry name" value="Cellulose_deg_GH3"/>
</dbReference>
<dbReference type="InterPro" id="IPR026891">
    <property type="entry name" value="Fn3-like"/>
</dbReference>
<dbReference type="InterPro" id="IPR002772">
    <property type="entry name" value="Glyco_hydro_3_C"/>
</dbReference>
<dbReference type="InterPro" id="IPR036881">
    <property type="entry name" value="Glyco_hydro_3_C_sf"/>
</dbReference>
<dbReference type="InterPro" id="IPR001764">
    <property type="entry name" value="Glyco_hydro_3_N"/>
</dbReference>
<dbReference type="InterPro" id="IPR036962">
    <property type="entry name" value="Glyco_hydro_3_N_sf"/>
</dbReference>
<dbReference type="InterPro" id="IPR017853">
    <property type="entry name" value="Glycoside_hydrolase_SF"/>
</dbReference>
<dbReference type="InterPro" id="IPR013783">
    <property type="entry name" value="Ig-like_fold"/>
</dbReference>
<dbReference type="PANTHER" id="PTHR42715">
    <property type="entry name" value="BETA-GLUCOSIDASE"/>
    <property type="match status" value="1"/>
</dbReference>
<dbReference type="PANTHER" id="PTHR42715:SF20">
    <property type="entry name" value="BETA-GLUCOSIDASE E-RELATED"/>
    <property type="match status" value="1"/>
</dbReference>
<dbReference type="Pfam" id="PF14310">
    <property type="entry name" value="Fn3-like"/>
    <property type="match status" value="1"/>
</dbReference>
<dbReference type="Pfam" id="PF00933">
    <property type="entry name" value="Glyco_hydro_3"/>
    <property type="match status" value="1"/>
</dbReference>
<dbReference type="Pfam" id="PF01915">
    <property type="entry name" value="Glyco_hydro_3_C"/>
    <property type="match status" value="1"/>
</dbReference>
<dbReference type="PRINTS" id="PR00133">
    <property type="entry name" value="GLHYDRLASE3"/>
</dbReference>
<dbReference type="SMART" id="SM01217">
    <property type="entry name" value="Fn3_like"/>
    <property type="match status" value="1"/>
</dbReference>
<dbReference type="SUPFAM" id="SSF51445">
    <property type="entry name" value="(Trans)glycosidases"/>
    <property type="match status" value="1"/>
</dbReference>
<dbReference type="SUPFAM" id="SSF52279">
    <property type="entry name" value="Beta-D-glucan exohydrolase, C-terminal domain"/>
    <property type="match status" value="1"/>
</dbReference>
<keyword id="KW-0119">Carbohydrate metabolism</keyword>
<keyword id="KW-1003">Cell membrane</keyword>
<keyword id="KW-0136">Cellulose degradation</keyword>
<keyword id="KW-0325">Glycoprotein</keyword>
<keyword id="KW-0326">Glycosidase</keyword>
<keyword id="KW-0378">Hydrolase</keyword>
<keyword id="KW-0472">Membrane</keyword>
<keyword id="KW-0624">Polysaccharide degradation</keyword>
<keyword id="KW-1185">Reference proteome</keyword>
<keyword id="KW-0735">Signal-anchor</keyword>
<keyword id="KW-0812">Transmembrane</keyword>
<keyword id="KW-1133">Transmembrane helix</keyword>
<name>BGLE_ASPCL</name>
<gene>
    <name type="primary">bglE</name>
    <name type="ORF">ACLA_096980</name>
</gene>
<feature type="chain" id="PRO_0000394870" description="Probable beta-glucosidase E">
    <location>
        <begin position="1"/>
        <end position="1050"/>
    </location>
</feature>
<feature type="topological domain" description="Cytoplasmic" evidence="2">
    <location>
        <begin position="1"/>
        <end position="174"/>
    </location>
</feature>
<feature type="transmembrane region" description="Helical; Signal-anchor for type II membrane protein" evidence="2">
    <location>
        <begin position="175"/>
        <end position="195"/>
    </location>
</feature>
<feature type="topological domain" description="Extracellular" evidence="2">
    <location>
        <begin position="196"/>
        <end position="1050"/>
    </location>
</feature>
<feature type="region of interest" description="Disordered" evidence="3">
    <location>
        <begin position="1"/>
        <end position="87"/>
    </location>
</feature>
<feature type="compositionally biased region" description="Basic and acidic residues" evidence="3">
    <location>
        <begin position="11"/>
        <end position="20"/>
    </location>
</feature>
<feature type="compositionally biased region" description="Low complexity" evidence="3">
    <location>
        <begin position="47"/>
        <end position="56"/>
    </location>
</feature>
<feature type="compositionally biased region" description="Polar residues" evidence="3">
    <location>
        <begin position="78"/>
        <end position="87"/>
    </location>
</feature>
<feature type="active site" evidence="1">
    <location>
        <position position="458"/>
    </location>
</feature>
<feature type="glycosylation site" description="N-linked (GlcNAc...) asparagine" evidence="2">
    <location>
        <position position="236"/>
    </location>
</feature>
<feature type="glycosylation site" description="N-linked (GlcNAc...) asparagine" evidence="2">
    <location>
        <position position="244"/>
    </location>
</feature>
<feature type="glycosylation site" description="N-linked (GlcNAc...) asparagine" evidence="2">
    <location>
        <position position="300"/>
    </location>
</feature>
<feature type="glycosylation site" description="N-linked (GlcNAc...) asparagine" evidence="2">
    <location>
        <position position="430"/>
    </location>
</feature>
<feature type="glycosylation site" description="N-linked (GlcNAc...) asparagine" evidence="2">
    <location>
        <position position="501"/>
    </location>
</feature>
<feature type="glycosylation site" description="N-linked (GlcNAc...) asparagine" evidence="2">
    <location>
        <position position="540"/>
    </location>
</feature>
<feature type="glycosylation site" description="N-linked (GlcNAc...) asparagine" evidence="2">
    <location>
        <position position="605"/>
    </location>
</feature>
<feature type="glycosylation site" description="N-linked (GlcNAc...) asparagine" evidence="2">
    <location>
        <position position="884"/>
    </location>
</feature>
<feature type="glycosylation site" description="N-linked (GlcNAc...) asparagine" evidence="2">
    <location>
        <position position="920"/>
    </location>
</feature>
<feature type="glycosylation site" description="N-linked (GlcNAc...) asparagine" evidence="2">
    <location>
        <position position="929"/>
    </location>
</feature>
<feature type="glycosylation site" description="N-linked (GlcNAc...) asparagine" evidence="2">
    <location>
        <position position="993"/>
    </location>
</feature>
<reference key="1">
    <citation type="journal article" date="2008" name="PLoS Genet.">
        <title>Genomic islands in the pathogenic filamentous fungus Aspergillus fumigatus.</title>
        <authorList>
            <person name="Fedorova N.D."/>
            <person name="Khaldi N."/>
            <person name="Joardar V.S."/>
            <person name="Maiti R."/>
            <person name="Amedeo P."/>
            <person name="Anderson M.J."/>
            <person name="Crabtree J."/>
            <person name="Silva J.C."/>
            <person name="Badger J.H."/>
            <person name="Albarraq A."/>
            <person name="Angiuoli S."/>
            <person name="Bussey H."/>
            <person name="Bowyer P."/>
            <person name="Cotty P.J."/>
            <person name="Dyer P.S."/>
            <person name="Egan A."/>
            <person name="Galens K."/>
            <person name="Fraser-Liggett C.M."/>
            <person name="Haas B.J."/>
            <person name="Inman J.M."/>
            <person name="Kent R."/>
            <person name="Lemieux S."/>
            <person name="Malavazi I."/>
            <person name="Orvis J."/>
            <person name="Roemer T."/>
            <person name="Ronning C.M."/>
            <person name="Sundaram J.P."/>
            <person name="Sutton G."/>
            <person name="Turner G."/>
            <person name="Venter J.C."/>
            <person name="White O.R."/>
            <person name="Whitty B.R."/>
            <person name="Youngman P."/>
            <person name="Wolfe K.H."/>
            <person name="Goldman G.H."/>
            <person name="Wortman J.R."/>
            <person name="Jiang B."/>
            <person name="Denning D.W."/>
            <person name="Nierman W.C."/>
        </authorList>
    </citation>
    <scope>NUCLEOTIDE SEQUENCE [LARGE SCALE GENOMIC DNA]</scope>
    <source>
        <strain>ATCC 1007 / CBS 513.65 / DSM 816 / NCTC 3887 / NRRL 1 / QM 1276 / 107</strain>
    </source>
</reference>
<protein>
    <recommendedName>
        <fullName>Probable beta-glucosidase E</fullName>
        <ecNumber>3.2.1.21</ecNumber>
    </recommendedName>
    <alternativeName>
        <fullName>Beta-D-glucoside glucohydrolase E</fullName>
    </alternativeName>
    <alternativeName>
        <fullName>Cellobiase E</fullName>
    </alternativeName>
    <alternativeName>
        <fullName>Gentiobiase E</fullName>
    </alternativeName>
</protein>
<comment type="function">
    <text evidence="1">Beta-glucosidases are one of a number of cellulolytic enzymes involved in the degradation of cellulosic biomass. Catalyzes the last step releasing glucose from the inhibitory cellobiose (By similarity).</text>
</comment>
<comment type="catalytic activity">
    <reaction>
        <text>Hydrolysis of terminal, non-reducing beta-D-glucosyl residues with release of beta-D-glucose.</text>
        <dbReference type="EC" id="3.2.1.21"/>
    </reaction>
</comment>
<comment type="pathway">
    <text>Glycan metabolism; cellulose degradation.</text>
</comment>
<comment type="subcellular location">
    <subcellularLocation>
        <location evidence="1">Cell membrane</location>
        <topology evidence="1">Single-pass type II membrane protein</topology>
    </subcellularLocation>
</comment>
<comment type="similarity">
    <text evidence="4">Belongs to the glycosyl hydrolase 3 family.</text>
</comment>
<organism>
    <name type="scientific">Aspergillus clavatus (strain ATCC 1007 / CBS 513.65 / DSM 816 / NCTC 3887 / NRRL 1 / QM 1276 / 107)</name>
    <dbReference type="NCBI Taxonomy" id="344612"/>
    <lineage>
        <taxon>Eukaryota</taxon>
        <taxon>Fungi</taxon>
        <taxon>Dikarya</taxon>
        <taxon>Ascomycota</taxon>
        <taxon>Pezizomycotina</taxon>
        <taxon>Eurotiomycetes</taxon>
        <taxon>Eurotiomycetidae</taxon>
        <taxon>Eurotiales</taxon>
        <taxon>Aspergillaceae</taxon>
        <taxon>Aspergillus</taxon>
        <taxon>Aspergillus subgen. Fumigati</taxon>
    </lineage>
</organism>
<evidence type="ECO:0000250" key="1"/>
<evidence type="ECO:0000255" key="2"/>
<evidence type="ECO:0000256" key="3">
    <source>
        <dbReference type="SAM" id="MobiDB-lite"/>
    </source>
</evidence>
<evidence type="ECO:0000305" key="4"/>
<accession>A1CMH6</accession>
<proteinExistence type="inferred from homology"/>